<comment type="function">
    <text evidence="1">Promotes the exchange of GDP for GTP in EF-1-alpha/GDP, thus allowing the regeneration of EF-1-alpha/GTP that could then be used to form the ternary complex EF-1-alpha/GTP/AAtRNA.</text>
</comment>
<comment type="similarity">
    <text evidence="1">Belongs to the EF-1-beta/EF-1-delta family.</text>
</comment>
<name>EF1B_METLZ</name>
<keyword id="KW-0251">Elongation factor</keyword>
<keyword id="KW-0648">Protein biosynthesis</keyword>
<keyword id="KW-1185">Reference proteome</keyword>
<feature type="chain" id="PRO_0000366431" description="Elongation factor 1-beta">
    <location>
        <begin position="1"/>
        <end position="86"/>
    </location>
</feature>
<organism>
    <name type="scientific">Methanocorpusculum labreanum (strain ATCC 43576 / DSM 4855 / Z)</name>
    <dbReference type="NCBI Taxonomy" id="410358"/>
    <lineage>
        <taxon>Archaea</taxon>
        <taxon>Methanobacteriati</taxon>
        <taxon>Methanobacteriota</taxon>
        <taxon>Stenosarchaea group</taxon>
        <taxon>Methanomicrobia</taxon>
        <taxon>Methanomicrobiales</taxon>
        <taxon>Methanocorpusculaceae</taxon>
        <taxon>Methanocorpusculum</taxon>
    </lineage>
</organism>
<sequence>MGEVVVILKIMPESPDVDLEKLQADIRAKVSGIEDMKVEPIGFGLSAIKIAMITEDDEGAGDKIEGLFSQIPGIDRTEIESLNRLL</sequence>
<dbReference type="EMBL" id="CP000559">
    <property type="protein sequence ID" value="ABN06800.1"/>
    <property type="molecule type" value="Genomic_DNA"/>
</dbReference>
<dbReference type="RefSeq" id="WP_011833001.1">
    <property type="nucleotide sequence ID" value="NC_008942.1"/>
</dbReference>
<dbReference type="SMR" id="A2SR44"/>
<dbReference type="STRING" id="410358.Mlab_0626"/>
<dbReference type="GeneID" id="4795002"/>
<dbReference type="KEGG" id="mla:Mlab_0626"/>
<dbReference type="eggNOG" id="arCOG01988">
    <property type="taxonomic scope" value="Archaea"/>
</dbReference>
<dbReference type="HOGENOM" id="CLU_165896_0_0_2"/>
<dbReference type="OrthoDB" id="84643at2157"/>
<dbReference type="Proteomes" id="UP000000365">
    <property type="component" value="Chromosome"/>
</dbReference>
<dbReference type="GO" id="GO:0003746">
    <property type="term" value="F:translation elongation factor activity"/>
    <property type="evidence" value="ECO:0007669"/>
    <property type="project" value="UniProtKB-UniRule"/>
</dbReference>
<dbReference type="CDD" id="cd00292">
    <property type="entry name" value="EF1B"/>
    <property type="match status" value="1"/>
</dbReference>
<dbReference type="Gene3D" id="3.30.70.60">
    <property type="match status" value="1"/>
</dbReference>
<dbReference type="HAMAP" id="MF_00043">
    <property type="entry name" value="EF1_beta"/>
    <property type="match status" value="1"/>
</dbReference>
<dbReference type="InterPro" id="IPR036219">
    <property type="entry name" value="eEF-1beta-like_sf"/>
</dbReference>
<dbReference type="InterPro" id="IPR014038">
    <property type="entry name" value="EF1B_bsu/dsu_GNE"/>
</dbReference>
<dbReference type="InterPro" id="IPR014717">
    <property type="entry name" value="Transl_elong_EF1B/ribsomal_bS6"/>
</dbReference>
<dbReference type="InterPro" id="IPR004542">
    <property type="entry name" value="Transl_elong_EF1B_B_arc"/>
</dbReference>
<dbReference type="NCBIfam" id="TIGR00489">
    <property type="entry name" value="aEF-1_beta"/>
    <property type="match status" value="1"/>
</dbReference>
<dbReference type="NCBIfam" id="NF001670">
    <property type="entry name" value="PRK00435.1"/>
    <property type="match status" value="1"/>
</dbReference>
<dbReference type="PANTHER" id="PTHR39647">
    <property type="entry name" value="ELONGATION FACTOR 1-BETA"/>
    <property type="match status" value="1"/>
</dbReference>
<dbReference type="PANTHER" id="PTHR39647:SF1">
    <property type="entry name" value="ELONGATION FACTOR 1-BETA"/>
    <property type="match status" value="1"/>
</dbReference>
<dbReference type="Pfam" id="PF00736">
    <property type="entry name" value="EF1_GNE"/>
    <property type="match status" value="1"/>
</dbReference>
<dbReference type="PIRSF" id="PIRSF006521">
    <property type="entry name" value="Transl_elong_EF1B_B_arc"/>
    <property type="match status" value="1"/>
</dbReference>
<dbReference type="SMART" id="SM00888">
    <property type="entry name" value="EF1_GNE"/>
    <property type="match status" value="1"/>
</dbReference>
<dbReference type="SUPFAM" id="SSF54984">
    <property type="entry name" value="eEF-1beta-like"/>
    <property type="match status" value="1"/>
</dbReference>
<reference key="1">
    <citation type="journal article" date="2009" name="Stand. Genomic Sci.">
        <title>Complete genome sequence of Methanocorpusculum labreanum type strain Z.</title>
        <authorList>
            <person name="Anderson I.J."/>
            <person name="Sieprawska-Lupa M."/>
            <person name="Goltsman E."/>
            <person name="Lapidus A."/>
            <person name="Copeland A."/>
            <person name="Glavina Del Rio T."/>
            <person name="Tice H."/>
            <person name="Dalin E."/>
            <person name="Barry K."/>
            <person name="Pitluck S."/>
            <person name="Hauser L."/>
            <person name="Land M."/>
            <person name="Lucas S."/>
            <person name="Richardson P."/>
            <person name="Whitman W.B."/>
            <person name="Kyrpides N.C."/>
        </authorList>
    </citation>
    <scope>NUCLEOTIDE SEQUENCE [LARGE SCALE GENOMIC DNA]</scope>
    <source>
        <strain>ATCC 43576 / DSM 4855 / Z</strain>
    </source>
</reference>
<proteinExistence type="inferred from homology"/>
<protein>
    <recommendedName>
        <fullName evidence="1">Elongation factor 1-beta</fullName>
        <shortName evidence="1">EF-1-beta</shortName>
    </recommendedName>
    <alternativeName>
        <fullName evidence="1">aEF-1beta</fullName>
    </alternativeName>
</protein>
<gene>
    <name evidence="1" type="primary">ef1b</name>
    <name type="ordered locus">Mlab_0626</name>
</gene>
<evidence type="ECO:0000255" key="1">
    <source>
        <dbReference type="HAMAP-Rule" id="MF_00043"/>
    </source>
</evidence>
<accession>A2SR44</accession>